<reference key="1">
    <citation type="journal article" date="2008" name="Genome Res.">
        <title>Comparative genome analysis of Salmonella enteritidis PT4 and Salmonella gallinarum 287/91 provides insights into evolutionary and host adaptation pathways.</title>
        <authorList>
            <person name="Thomson N.R."/>
            <person name="Clayton D.J."/>
            <person name="Windhorst D."/>
            <person name="Vernikos G."/>
            <person name="Davidson S."/>
            <person name="Churcher C."/>
            <person name="Quail M.A."/>
            <person name="Stevens M."/>
            <person name="Jones M.A."/>
            <person name="Watson M."/>
            <person name="Barron A."/>
            <person name="Layton A."/>
            <person name="Pickard D."/>
            <person name="Kingsley R.A."/>
            <person name="Bignell A."/>
            <person name="Clark L."/>
            <person name="Harris B."/>
            <person name="Ormond D."/>
            <person name="Abdellah Z."/>
            <person name="Brooks K."/>
            <person name="Cherevach I."/>
            <person name="Chillingworth T."/>
            <person name="Woodward J."/>
            <person name="Norberczak H."/>
            <person name="Lord A."/>
            <person name="Arrowsmith C."/>
            <person name="Jagels K."/>
            <person name="Moule S."/>
            <person name="Mungall K."/>
            <person name="Saunders M."/>
            <person name="Whitehead S."/>
            <person name="Chabalgoity J.A."/>
            <person name="Maskell D."/>
            <person name="Humphreys T."/>
            <person name="Roberts M."/>
            <person name="Barrow P.A."/>
            <person name="Dougan G."/>
            <person name="Parkhill J."/>
        </authorList>
    </citation>
    <scope>NUCLEOTIDE SEQUENCE [LARGE SCALE GENOMIC DNA]</scope>
    <source>
        <strain>287/91 / NCTC 13346</strain>
    </source>
</reference>
<feature type="chain" id="PRO_1000131396" description="Phosphatidylserine decarboxylase beta chain" evidence="1">
    <location>
        <begin position="1"/>
        <end position="253"/>
    </location>
</feature>
<feature type="chain" id="PRO_1000131397" description="Phosphatidylserine decarboxylase alpha chain" evidence="1">
    <location>
        <begin position="254"/>
        <end position="322"/>
    </location>
</feature>
<feature type="region of interest" description="Disordered" evidence="2">
    <location>
        <begin position="296"/>
        <end position="322"/>
    </location>
</feature>
<feature type="compositionally biased region" description="Basic and acidic residues" evidence="2">
    <location>
        <begin position="303"/>
        <end position="322"/>
    </location>
</feature>
<feature type="active site" description="Charge relay system; for autoendoproteolytic cleavage activity" evidence="1">
    <location>
        <position position="90"/>
    </location>
</feature>
<feature type="active site" description="Charge relay system; for autoendoproteolytic cleavage activity" evidence="1">
    <location>
        <position position="147"/>
    </location>
</feature>
<feature type="active site" description="Charge relay system; for autoendoproteolytic cleavage activity" evidence="1">
    <location>
        <position position="254"/>
    </location>
</feature>
<feature type="active site" description="Schiff-base intermediate with substrate; via pyruvic acid; for decarboxylase activity" evidence="1">
    <location>
        <position position="254"/>
    </location>
</feature>
<feature type="site" description="Cleavage (non-hydrolytic); by autocatalysis" evidence="1">
    <location>
        <begin position="253"/>
        <end position="254"/>
    </location>
</feature>
<feature type="modified residue" description="Pyruvic acid (Ser); by autocatalysis" evidence="1">
    <location>
        <position position="254"/>
    </location>
</feature>
<dbReference type="EC" id="4.1.1.65" evidence="1"/>
<dbReference type="EMBL" id="AM933173">
    <property type="protein sequence ID" value="CAR39957.1"/>
    <property type="molecule type" value="Genomic_DNA"/>
</dbReference>
<dbReference type="SMR" id="B5R9A9"/>
<dbReference type="KEGG" id="seg:SG4191"/>
<dbReference type="HOGENOM" id="CLU_029061_4_1_6"/>
<dbReference type="UniPathway" id="UPA00558">
    <property type="reaction ID" value="UER00616"/>
</dbReference>
<dbReference type="Proteomes" id="UP000008321">
    <property type="component" value="Chromosome"/>
</dbReference>
<dbReference type="GO" id="GO:0005886">
    <property type="term" value="C:plasma membrane"/>
    <property type="evidence" value="ECO:0007669"/>
    <property type="project" value="UniProtKB-SubCell"/>
</dbReference>
<dbReference type="GO" id="GO:0004609">
    <property type="term" value="F:phosphatidylserine decarboxylase activity"/>
    <property type="evidence" value="ECO:0007669"/>
    <property type="project" value="UniProtKB-UniRule"/>
</dbReference>
<dbReference type="GO" id="GO:0006646">
    <property type="term" value="P:phosphatidylethanolamine biosynthetic process"/>
    <property type="evidence" value="ECO:0007669"/>
    <property type="project" value="UniProtKB-UniRule"/>
</dbReference>
<dbReference type="HAMAP" id="MF_00662">
    <property type="entry name" value="PS_decarb_PSD_B_type1"/>
    <property type="match status" value="1"/>
</dbReference>
<dbReference type="InterPro" id="IPR003817">
    <property type="entry name" value="PS_Dcarbxylase"/>
</dbReference>
<dbReference type="InterPro" id="IPR033177">
    <property type="entry name" value="PSD-B"/>
</dbReference>
<dbReference type="InterPro" id="IPR033178">
    <property type="entry name" value="PSD_type1_pro"/>
</dbReference>
<dbReference type="NCBIfam" id="TIGR00163">
    <property type="entry name" value="PS_decarb"/>
    <property type="match status" value="1"/>
</dbReference>
<dbReference type="PANTHER" id="PTHR10067">
    <property type="entry name" value="PHOSPHATIDYLSERINE DECARBOXYLASE"/>
    <property type="match status" value="1"/>
</dbReference>
<dbReference type="PANTHER" id="PTHR10067:SF6">
    <property type="entry name" value="PHOSPHATIDYLSERINE DECARBOXYLASE PROENZYME, MITOCHONDRIAL"/>
    <property type="match status" value="1"/>
</dbReference>
<dbReference type="Pfam" id="PF02666">
    <property type="entry name" value="PS_Dcarbxylase"/>
    <property type="match status" value="1"/>
</dbReference>
<evidence type="ECO:0000255" key="1">
    <source>
        <dbReference type="HAMAP-Rule" id="MF_00662"/>
    </source>
</evidence>
<evidence type="ECO:0000256" key="2">
    <source>
        <dbReference type="SAM" id="MobiDB-lite"/>
    </source>
</evidence>
<organism>
    <name type="scientific">Salmonella gallinarum (strain 287/91 / NCTC 13346)</name>
    <dbReference type="NCBI Taxonomy" id="550538"/>
    <lineage>
        <taxon>Bacteria</taxon>
        <taxon>Pseudomonadati</taxon>
        <taxon>Pseudomonadota</taxon>
        <taxon>Gammaproteobacteria</taxon>
        <taxon>Enterobacterales</taxon>
        <taxon>Enterobacteriaceae</taxon>
        <taxon>Salmonella</taxon>
    </lineage>
</organism>
<gene>
    <name evidence="1" type="primary">psd</name>
    <name type="ordered locus">SG4191</name>
</gene>
<protein>
    <recommendedName>
        <fullName evidence="1">Phosphatidylserine decarboxylase proenzyme</fullName>
        <ecNumber evidence="1">4.1.1.65</ecNumber>
    </recommendedName>
    <component>
        <recommendedName>
            <fullName evidence="1">Phosphatidylserine decarboxylase alpha chain</fullName>
        </recommendedName>
    </component>
    <component>
        <recommendedName>
            <fullName evidence="1">Phosphatidylserine decarboxylase beta chain</fullName>
        </recommendedName>
    </component>
</protein>
<keyword id="KW-1003">Cell membrane</keyword>
<keyword id="KW-0210">Decarboxylase</keyword>
<keyword id="KW-0444">Lipid biosynthesis</keyword>
<keyword id="KW-0443">Lipid metabolism</keyword>
<keyword id="KW-0456">Lyase</keyword>
<keyword id="KW-0472">Membrane</keyword>
<keyword id="KW-0594">Phospholipid biosynthesis</keyword>
<keyword id="KW-1208">Phospholipid metabolism</keyword>
<keyword id="KW-0670">Pyruvate</keyword>
<keyword id="KW-0865">Zymogen</keyword>
<name>PSD_SALG2</name>
<comment type="function">
    <text evidence="1">Catalyzes the formation of phosphatidylethanolamine (PtdEtn) from phosphatidylserine (PtdSer).</text>
</comment>
<comment type="catalytic activity">
    <reaction evidence="1">
        <text>a 1,2-diacyl-sn-glycero-3-phospho-L-serine + H(+) = a 1,2-diacyl-sn-glycero-3-phosphoethanolamine + CO2</text>
        <dbReference type="Rhea" id="RHEA:20828"/>
        <dbReference type="ChEBI" id="CHEBI:15378"/>
        <dbReference type="ChEBI" id="CHEBI:16526"/>
        <dbReference type="ChEBI" id="CHEBI:57262"/>
        <dbReference type="ChEBI" id="CHEBI:64612"/>
        <dbReference type="EC" id="4.1.1.65"/>
    </reaction>
</comment>
<comment type="cofactor">
    <cofactor evidence="1">
        <name>pyruvate</name>
        <dbReference type="ChEBI" id="CHEBI:15361"/>
    </cofactor>
    <text evidence="1">Binds 1 pyruvoyl group covalently per subunit.</text>
</comment>
<comment type="pathway">
    <text evidence="1">Phospholipid metabolism; phosphatidylethanolamine biosynthesis; phosphatidylethanolamine from CDP-diacylglycerol: step 2/2.</text>
</comment>
<comment type="subunit">
    <text evidence="1">Heterodimer of a large membrane-associated beta subunit and a small pyruvoyl-containing alpha subunit.</text>
</comment>
<comment type="subcellular location">
    <subcellularLocation>
        <location evidence="1">Cell membrane</location>
        <topology evidence="1">Peripheral membrane protein</topology>
    </subcellularLocation>
</comment>
<comment type="PTM">
    <text evidence="1">Is synthesized initially as an inactive proenzyme. Formation of the active enzyme involves a self-maturation process in which the active site pyruvoyl group is generated from an internal serine residue via an autocatalytic post-translational modification. Two non-identical subunits are generated from the proenzyme in this reaction, and the pyruvate is formed at the N-terminus of the alpha chain, which is derived from the carboxyl end of the proenzyme. The autoendoproteolytic cleavage occurs by a canonical serine protease mechanism, in which the side chain hydroxyl group of the serine supplies its oxygen atom to form the C-terminus of the beta chain, while the remainder of the serine residue undergoes an oxidative deamination to produce ammonia and the pyruvoyl prosthetic group on the alpha chain. During this reaction, the Ser that is part of the protease active site of the proenzyme becomes the pyruvoyl prosthetic group, which constitutes an essential element of the active site of the mature decarboxylase.</text>
</comment>
<comment type="similarity">
    <text evidence="1">Belongs to the phosphatidylserine decarboxylase family. PSD-B subfamily. Prokaryotic type I sub-subfamily.</text>
</comment>
<accession>B5R9A9</accession>
<sequence>MLNSFKLSLQYILPKLWLTRLAGWGASKRAGWLTKLVIDLFVKYYKVDMTEAQKPDTASYRTFNDFFVRPLRDDVRPLNTDPNILVMPADGVISQLGRIEEDKILQAKGHNYSLEALLAGNYLMADKFRNGTFVTTYLSPRDYHRVHMPCNGILREMIYVPGDLFSVNHLTAQNVPNLFARNERVICLFDTEFGPMAQILVGATIVGSIETVWAGTITPPREGIIKRWTWPEGEHEGSVALLKGQEMGRFKLGSTVINLFAPGKVNLIASLASLSVTKIGQPLATSTETFVAPEVEPAPLPAEEIKAEHDASPLVDNKKDDT</sequence>
<proteinExistence type="inferred from homology"/>